<reference key="1">
    <citation type="journal article" date="2002" name="Nucleic Acids Res.">
        <title>Genome sequence of Shigella flexneri 2a: insights into pathogenicity through comparison with genomes of Escherichia coli K12 and O157.</title>
        <authorList>
            <person name="Jin Q."/>
            <person name="Yuan Z."/>
            <person name="Xu J."/>
            <person name="Wang Y."/>
            <person name="Shen Y."/>
            <person name="Lu W."/>
            <person name="Wang J."/>
            <person name="Liu H."/>
            <person name="Yang J."/>
            <person name="Yang F."/>
            <person name="Zhang X."/>
            <person name="Zhang J."/>
            <person name="Yang G."/>
            <person name="Wu H."/>
            <person name="Qu D."/>
            <person name="Dong J."/>
            <person name="Sun L."/>
            <person name="Xue Y."/>
            <person name="Zhao A."/>
            <person name="Gao Y."/>
            <person name="Zhu J."/>
            <person name="Kan B."/>
            <person name="Ding K."/>
            <person name="Chen S."/>
            <person name="Cheng H."/>
            <person name="Yao Z."/>
            <person name="He B."/>
            <person name="Chen R."/>
            <person name="Ma D."/>
            <person name="Qiang B."/>
            <person name="Wen Y."/>
            <person name="Hou Y."/>
            <person name="Yu J."/>
        </authorList>
    </citation>
    <scope>NUCLEOTIDE SEQUENCE [LARGE SCALE GENOMIC DNA]</scope>
    <source>
        <strain>301 / Serotype 2a</strain>
    </source>
</reference>
<reference key="2">
    <citation type="journal article" date="2003" name="Infect. Immun.">
        <title>Complete genome sequence and comparative genomics of Shigella flexneri serotype 2a strain 2457T.</title>
        <authorList>
            <person name="Wei J."/>
            <person name="Goldberg M.B."/>
            <person name="Burland V."/>
            <person name="Venkatesan M.M."/>
            <person name="Deng W."/>
            <person name="Fournier G."/>
            <person name="Mayhew G.F."/>
            <person name="Plunkett G. III"/>
            <person name="Rose D.J."/>
            <person name="Darling A."/>
            <person name="Mau B."/>
            <person name="Perna N.T."/>
            <person name="Payne S.M."/>
            <person name="Runyen-Janecky L.J."/>
            <person name="Zhou S."/>
            <person name="Schwartz D.C."/>
            <person name="Blattner F.R."/>
        </authorList>
    </citation>
    <scope>NUCLEOTIDE SEQUENCE [LARGE SCALE GENOMIC DNA]</scope>
    <source>
        <strain>ATCC 700930 / 2457T / Serotype 2a</strain>
    </source>
</reference>
<keyword id="KW-0007">Acetylation</keyword>
<keyword id="KW-0240">DNA-directed RNA polymerase</keyword>
<keyword id="KW-0548">Nucleotidyltransferase</keyword>
<keyword id="KW-1185">Reference proteome</keyword>
<keyword id="KW-0804">Transcription</keyword>
<keyword id="KW-0808">Transferase</keyword>
<feature type="chain" id="PRO_0000047956" description="DNA-directed RNA polymerase subunit beta">
    <location>
        <begin position="1"/>
        <end position="1342"/>
    </location>
</feature>
<feature type="modified residue" description="N6-acetyllysine" evidence="1">
    <location>
        <position position="1022"/>
    </location>
</feature>
<feature type="modified residue" description="N6-acetyllysine" evidence="1">
    <location>
        <position position="1200"/>
    </location>
</feature>
<sequence length="1342" mass="150632">MVYSYTEKKRIRKDFGKRPQVLDVPYLLSIQLDSFQKFIEQDPEGQYGLEAAFRSVFPIQSYSGNSELQYVSYRLGEPVFDVQECQIRGVTYSAPLRVKLRLVIYEREAPEGTVKDIKEQEVYMGEIPLMTDNGTFVINGTERVIVSQLHRSPGVFFDSDKGKTHSSGKVLYNARIIPYRGSWLDFEFDPKDNLFVRIDRRRKLPATIILRALNYTTEQILDLFFEKVIFEIRDNKLQMELVPERLRGETASFDIEANGKVYVEKGRRITARHIRQLEKDDVKLIEVPVEYIAGKVVAKDYIDESTGELICAANMELSLDLLAKLSQSGHKRIETLFTNDLDHGPYISETLRVDPTNDRLSALVEIYRMMRPGEPPTREAAESLFENLFFSEDRYDLSAVGRMKFNRSLLREEIEGSGILSKDDIIDVMKKLIDIRNGKGEVDDIDHLGNRRIRSVGEMAENQFRVGLVRVERAVKERLSLGDLDTLMPQDMINAKPISAAVKEFFGSSQLSQFMDQNNPLSEITHKRRISALGPGGLTRERAGFEVRDVHPTHYGRVCPIETPEGPNIGLINSLSVYAQTNEYGFLETPYRKVTDGVVTDEIHYLSAIEEGNYVIAQANSNLDEEGHFVEDLVTCRSKGESSLFSRDQVDYMDVSTQQVVSVGASLIPFLEHDDANRALMGANMQRQAVPTLRADKPLVGTGMERAVAVDSGVTAVAKRGGVVQYVDASRIVIKVNEDEMYPGEAGIDIYNLTKYTRSNQNTCINQMPCVSLGEPVERGDVLADGPSTDLGELALGQNMRVAFMPWNGYNFEDSILVSERVVQEDRFTTIHIQELACVSRDTKLGPEEITADIPNVGEAALSKLDESGIVYIGAEVTGGDILVGKVTPKGETQLTPEEKLLRAIFGEKASDVKDSSLRVPNGVSGTVIDVQVFTRDGVEKDKRALEIEEMQLKQAKKDLSEELQILEAGLFSRIRAVLVAGGVEAEKLDKLPRDRWLELGLTDEEKQNQLEQLAEQYDELKHEFEKKLEAKRRKITQGDDLAPGVLKIVKVYLAVKRRIQPGDKMAGRHGNKGVISKINPIEDMPYDENGTPVDIVLNPLGVPSRMNIGQILETHLGMAAKGIGDKINAMLKQQQEVAKLREFIQRAYDLGADVRQKVDLSTFSDEEVMRLAENLRKGMPIATPVFDGAKEAEIKELLKLGDLPTSGQIRLYDGRTGEQFERPVTVGYMYMLKLNHLVDDKMHARSTGSYSLVTQQPLGGKAQFGGQRFGEMEVWALEAYGAAYTLQEMLTVKSDDVNGRTKMYKNIVDGNHQMEPGMPESFNVLLKEIRSLGINIELEDE</sequence>
<evidence type="ECO:0000255" key="1">
    <source>
        <dbReference type="HAMAP-Rule" id="MF_01321"/>
    </source>
</evidence>
<name>RPOB_SHIFL</name>
<comment type="function">
    <text evidence="1">DNA-dependent RNA polymerase catalyzes the transcription of DNA into RNA using the four ribonucleoside triphosphates as substrates.</text>
</comment>
<comment type="catalytic activity">
    <reaction evidence="1">
        <text>RNA(n) + a ribonucleoside 5'-triphosphate = RNA(n+1) + diphosphate</text>
        <dbReference type="Rhea" id="RHEA:21248"/>
        <dbReference type="Rhea" id="RHEA-COMP:14527"/>
        <dbReference type="Rhea" id="RHEA-COMP:17342"/>
        <dbReference type="ChEBI" id="CHEBI:33019"/>
        <dbReference type="ChEBI" id="CHEBI:61557"/>
        <dbReference type="ChEBI" id="CHEBI:140395"/>
        <dbReference type="EC" id="2.7.7.6"/>
    </reaction>
</comment>
<comment type="subunit">
    <text evidence="1">The RNAP catalytic core consists of 2 alpha, 1 beta, 1 beta' and 1 omega subunit. When a sigma factor is associated with the core the holoenzyme is formed, which can initiate transcription.</text>
</comment>
<comment type="similarity">
    <text evidence="1">Belongs to the RNA polymerase beta chain family.</text>
</comment>
<protein>
    <recommendedName>
        <fullName evidence="1">DNA-directed RNA polymerase subunit beta</fullName>
        <shortName evidence="1">RNAP subunit beta</shortName>
        <ecNumber evidence="1">2.7.7.6</ecNumber>
    </recommendedName>
    <alternativeName>
        <fullName evidence="1">RNA polymerase subunit beta</fullName>
    </alternativeName>
    <alternativeName>
        <fullName evidence="1">Transcriptase subunit beta</fullName>
    </alternativeName>
</protein>
<dbReference type="EC" id="2.7.7.6" evidence="1"/>
<dbReference type="EMBL" id="AE005674">
    <property type="protein sequence ID" value="AAN45489.2"/>
    <property type="molecule type" value="Genomic_DNA"/>
</dbReference>
<dbReference type="EMBL" id="AE014073">
    <property type="protein sequence ID" value="AAP18712.1"/>
    <property type="molecule type" value="Genomic_DNA"/>
</dbReference>
<dbReference type="RefSeq" id="NP_709782.2">
    <property type="nucleotide sequence ID" value="NC_004337.2"/>
</dbReference>
<dbReference type="RefSeq" id="WP_000263098.1">
    <property type="nucleotide sequence ID" value="NZ_WPGW01000040.1"/>
</dbReference>
<dbReference type="SMR" id="P0A8V5"/>
<dbReference type="STRING" id="198214.SF4060"/>
<dbReference type="PaxDb" id="198214-SF4060"/>
<dbReference type="GeneID" id="1026967"/>
<dbReference type="GeneID" id="93777907"/>
<dbReference type="KEGG" id="sfl:SF4060"/>
<dbReference type="KEGG" id="sfx:S3675"/>
<dbReference type="PATRIC" id="fig|198214.7.peg.4783"/>
<dbReference type="HOGENOM" id="CLU_000524_4_3_6"/>
<dbReference type="Proteomes" id="UP000001006">
    <property type="component" value="Chromosome"/>
</dbReference>
<dbReference type="Proteomes" id="UP000002673">
    <property type="component" value="Chromosome"/>
</dbReference>
<dbReference type="GO" id="GO:0000428">
    <property type="term" value="C:DNA-directed RNA polymerase complex"/>
    <property type="evidence" value="ECO:0007669"/>
    <property type="project" value="UniProtKB-KW"/>
</dbReference>
<dbReference type="GO" id="GO:0003677">
    <property type="term" value="F:DNA binding"/>
    <property type="evidence" value="ECO:0007669"/>
    <property type="project" value="UniProtKB-UniRule"/>
</dbReference>
<dbReference type="GO" id="GO:0003899">
    <property type="term" value="F:DNA-directed RNA polymerase activity"/>
    <property type="evidence" value="ECO:0007669"/>
    <property type="project" value="UniProtKB-UniRule"/>
</dbReference>
<dbReference type="GO" id="GO:0032549">
    <property type="term" value="F:ribonucleoside binding"/>
    <property type="evidence" value="ECO:0007669"/>
    <property type="project" value="InterPro"/>
</dbReference>
<dbReference type="GO" id="GO:0006351">
    <property type="term" value="P:DNA-templated transcription"/>
    <property type="evidence" value="ECO:0007669"/>
    <property type="project" value="UniProtKB-UniRule"/>
</dbReference>
<dbReference type="CDD" id="cd00653">
    <property type="entry name" value="RNA_pol_B_RPB2"/>
    <property type="match status" value="1"/>
</dbReference>
<dbReference type="FunFam" id="2.30.150.10:FF:000001">
    <property type="entry name" value="DNA-directed RNA polymerase subunit beta"/>
    <property type="match status" value="1"/>
</dbReference>
<dbReference type="FunFam" id="2.40.270.10:FF:000003">
    <property type="entry name" value="DNA-directed RNA polymerase subunit beta"/>
    <property type="match status" value="1"/>
</dbReference>
<dbReference type="FunFam" id="2.40.270.10:FF:000004">
    <property type="entry name" value="DNA-directed RNA polymerase subunit beta"/>
    <property type="match status" value="1"/>
</dbReference>
<dbReference type="FunFam" id="2.40.50.100:FF:000006">
    <property type="entry name" value="DNA-directed RNA polymerase subunit beta"/>
    <property type="match status" value="1"/>
</dbReference>
<dbReference type="FunFam" id="2.40.50.150:FF:000001">
    <property type="entry name" value="DNA-directed RNA polymerase subunit beta"/>
    <property type="match status" value="1"/>
</dbReference>
<dbReference type="FunFam" id="3.90.1100.10:FF:000002">
    <property type="entry name" value="DNA-directed RNA polymerase subunit beta"/>
    <property type="match status" value="1"/>
</dbReference>
<dbReference type="FunFam" id="3.90.1110.10:FF:000001">
    <property type="entry name" value="DNA-directed RNA polymerase subunit beta"/>
    <property type="match status" value="1"/>
</dbReference>
<dbReference type="FunFam" id="3.90.1110.10:FF:000004">
    <property type="entry name" value="DNA-directed RNA polymerase subunit beta"/>
    <property type="match status" value="1"/>
</dbReference>
<dbReference type="FunFam" id="3.90.1800.10:FF:000001">
    <property type="entry name" value="DNA-directed RNA polymerase subunit beta"/>
    <property type="match status" value="1"/>
</dbReference>
<dbReference type="Gene3D" id="2.40.50.100">
    <property type="match status" value="1"/>
</dbReference>
<dbReference type="Gene3D" id="2.40.50.150">
    <property type="match status" value="1"/>
</dbReference>
<dbReference type="Gene3D" id="3.90.1100.10">
    <property type="match status" value="2"/>
</dbReference>
<dbReference type="Gene3D" id="6.10.140.1670">
    <property type="match status" value="1"/>
</dbReference>
<dbReference type="Gene3D" id="2.30.150.10">
    <property type="entry name" value="DNA-directed RNA polymerase, beta subunit, external 1 domain"/>
    <property type="match status" value="1"/>
</dbReference>
<dbReference type="Gene3D" id="2.40.270.10">
    <property type="entry name" value="DNA-directed RNA polymerase, subunit 2, domain 6"/>
    <property type="match status" value="1"/>
</dbReference>
<dbReference type="Gene3D" id="3.90.1800.10">
    <property type="entry name" value="RNA polymerase alpha subunit dimerisation domain"/>
    <property type="match status" value="1"/>
</dbReference>
<dbReference type="Gene3D" id="3.90.1110.10">
    <property type="entry name" value="RNA polymerase Rpb2, domain 2"/>
    <property type="match status" value="1"/>
</dbReference>
<dbReference type="HAMAP" id="MF_01321">
    <property type="entry name" value="RNApol_bact_RpoB"/>
    <property type="match status" value="1"/>
</dbReference>
<dbReference type="InterPro" id="IPR042107">
    <property type="entry name" value="DNA-dir_RNA_pol_bsu_ext_1_sf"/>
</dbReference>
<dbReference type="InterPro" id="IPR019462">
    <property type="entry name" value="DNA-dir_RNA_pol_bsu_external_1"/>
</dbReference>
<dbReference type="InterPro" id="IPR015712">
    <property type="entry name" value="DNA-dir_RNA_pol_su2"/>
</dbReference>
<dbReference type="InterPro" id="IPR007120">
    <property type="entry name" value="DNA-dir_RNAP_su2_dom"/>
</dbReference>
<dbReference type="InterPro" id="IPR037033">
    <property type="entry name" value="DNA-dir_RNAP_su2_hyb_sf"/>
</dbReference>
<dbReference type="InterPro" id="IPR010243">
    <property type="entry name" value="RNA_pol_bsu_bac"/>
</dbReference>
<dbReference type="InterPro" id="IPR007121">
    <property type="entry name" value="RNA_pol_bsu_CS"/>
</dbReference>
<dbReference type="InterPro" id="IPR007644">
    <property type="entry name" value="RNA_pol_bsu_protrusion"/>
</dbReference>
<dbReference type="InterPro" id="IPR007642">
    <property type="entry name" value="RNA_pol_Rpb2_2"/>
</dbReference>
<dbReference type="InterPro" id="IPR037034">
    <property type="entry name" value="RNA_pol_Rpb2_2_sf"/>
</dbReference>
<dbReference type="InterPro" id="IPR007645">
    <property type="entry name" value="RNA_pol_Rpb2_3"/>
</dbReference>
<dbReference type="InterPro" id="IPR007641">
    <property type="entry name" value="RNA_pol_Rpb2_7"/>
</dbReference>
<dbReference type="InterPro" id="IPR014724">
    <property type="entry name" value="RNA_pol_RPB2_OB-fold"/>
</dbReference>
<dbReference type="NCBIfam" id="NF001616">
    <property type="entry name" value="PRK00405.1"/>
    <property type="match status" value="1"/>
</dbReference>
<dbReference type="NCBIfam" id="TIGR02013">
    <property type="entry name" value="rpoB"/>
    <property type="match status" value="1"/>
</dbReference>
<dbReference type="PANTHER" id="PTHR20856">
    <property type="entry name" value="DNA-DIRECTED RNA POLYMERASE I SUBUNIT 2"/>
    <property type="match status" value="1"/>
</dbReference>
<dbReference type="Pfam" id="PF04563">
    <property type="entry name" value="RNA_pol_Rpb2_1"/>
    <property type="match status" value="1"/>
</dbReference>
<dbReference type="Pfam" id="PF04561">
    <property type="entry name" value="RNA_pol_Rpb2_2"/>
    <property type="match status" value="2"/>
</dbReference>
<dbReference type="Pfam" id="PF04565">
    <property type="entry name" value="RNA_pol_Rpb2_3"/>
    <property type="match status" value="1"/>
</dbReference>
<dbReference type="Pfam" id="PF10385">
    <property type="entry name" value="RNA_pol_Rpb2_45"/>
    <property type="match status" value="1"/>
</dbReference>
<dbReference type="Pfam" id="PF00562">
    <property type="entry name" value="RNA_pol_Rpb2_6"/>
    <property type="match status" value="1"/>
</dbReference>
<dbReference type="Pfam" id="PF04560">
    <property type="entry name" value="RNA_pol_Rpb2_7"/>
    <property type="match status" value="1"/>
</dbReference>
<dbReference type="SUPFAM" id="SSF64484">
    <property type="entry name" value="beta and beta-prime subunits of DNA dependent RNA-polymerase"/>
    <property type="match status" value="1"/>
</dbReference>
<dbReference type="PROSITE" id="PS01166">
    <property type="entry name" value="RNA_POL_BETA"/>
    <property type="match status" value="1"/>
</dbReference>
<organism>
    <name type="scientific">Shigella flexneri</name>
    <dbReference type="NCBI Taxonomy" id="623"/>
    <lineage>
        <taxon>Bacteria</taxon>
        <taxon>Pseudomonadati</taxon>
        <taxon>Pseudomonadota</taxon>
        <taxon>Gammaproteobacteria</taxon>
        <taxon>Enterobacterales</taxon>
        <taxon>Enterobacteriaceae</taxon>
        <taxon>Shigella</taxon>
    </lineage>
</organism>
<proteinExistence type="inferred from homology"/>
<gene>
    <name evidence="1" type="primary">rpoB</name>
    <name type="ordered locus">SF4060</name>
    <name type="ordered locus">S3675</name>
</gene>
<accession>P0A8V5</accession>
<accession>P00575</accession>
<accession>P00576</accession>
<accession>P78242</accession>